<name>ATPB_PECFR</name>
<keyword id="KW-0066">ATP synthesis</keyword>
<keyword id="KW-0067">ATP-binding</keyword>
<keyword id="KW-1003">Cell membrane</keyword>
<keyword id="KW-0139">CF(1)</keyword>
<keyword id="KW-0375">Hydrogen ion transport</keyword>
<keyword id="KW-0406">Ion transport</keyword>
<keyword id="KW-0472">Membrane</keyword>
<keyword id="KW-0547">Nucleotide-binding</keyword>
<keyword id="KW-1278">Translocase</keyword>
<keyword id="KW-0813">Transport</keyword>
<proteinExistence type="inferred from homology"/>
<feature type="chain" id="PRO_0000144458" description="ATP synthase subunit beta">
    <location>
        <begin position="1"/>
        <end position="470"/>
    </location>
</feature>
<feature type="binding site" evidence="1">
    <location>
        <begin position="155"/>
        <end position="162"/>
    </location>
    <ligand>
        <name>ATP</name>
        <dbReference type="ChEBI" id="CHEBI:30616"/>
    </ligand>
</feature>
<evidence type="ECO:0000255" key="1">
    <source>
        <dbReference type="HAMAP-Rule" id="MF_01347"/>
    </source>
</evidence>
<organism>
    <name type="scientific">Pectinatus frisingensis</name>
    <dbReference type="NCBI Taxonomy" id="865"/>
    <lineage>
        <taxon>Bacteria</taxon>
        <taxon>Bacillati</taxon>
        <taxon>Bacillota</taxon>
        <taxon>Negativicutes</taxon>
        <taxon>Selenomonadales</taxon>
        <taxon>Selenomonadaceae</taxon>
        <taxon>Pectinatus</taxon>
    </lineage>
</organism>
<dbReference type="EC" id="7.1.2.2" evidence="1"/>
<dbReference type="EMBL" id="X64543">
    <property type="protein sequence ID" value="CAA45841.1"/>
    <property type="molecule type" value="Genomic_DNA"/>
</dbReference>
<dbReference type="PIR" id="S30598">
    <property type="entry name" value="S30598"/>
</dbReference>
<dbReference type="SMR" id="Q03235"/>
<dbReference type="GO" id="GO:0005886">
    <property type="term" value="C:plasma membrane"/>
    <property type="evidence" value="ECO:0007669"/>
    <property type="project" value="UniProtKB-SubCell"/>
</dbReference>
<dbReference type="GO" id="GO:0045259">
    <property type="term" value="C:proton-transporting ATP synthase complex"/>
    <property type="evidence" value="ECO:0007669"/>
    <property type="project" value="UniProtKB-KW"/>
</dbReference>
<dbReference type="GO" id="GO:0005524">
    <property type="term" value="F:ATP binding"/>
    <property type="evidence" value="ECO:0007669"/>
    <property type="project" value="UniProtKB-UniRule"/>
</dbReference>
<dbReference type="GO" id="GO:0016887">
    <property type="term" value="F:ATP hydrolysis activity"/>
    <property type="evidence" value="ECO:0007669"/>
    <property type="project" value="InterPro"/>
</dbReference>
<dbReference type="GO" id="GO:0046933">
    <property type="term" value="F:proton-transporting ATP synthase activity, rotational mechanism"/>
    <property type="evidence" value="ECO:0007669"/>
    <property type="project" value="UniProtKB-UniRule"/>
</dbReference>
<dbReference type="CDD" id="cd18110">
    <property type="entry name" value="ATP-synt_F1_beta_C"/>
    <property type="match status" value="1"/>
</dbReference>
<dbReference type="CDD" id="cd18115">
    <property type="entry name" value="ATP-synt_F1_beta_N"/>
    <property type="match status" value="1"/>
</dbReference>
<dbReference type="CDD" id="cd01133">
    <property type="entry name" value="F1-ATPase_beta_CD"/>
    <property type="match status" value="1"/>
</dbReference>
<dbReference type="FunFam" id="1.10.1140.10:FF:000001">
    <property type="entry name" value="ATP synthase subunit beta"/>
    <property type="match status" value="1"/>
</dbReference>
<dbReference type="FunFam" id="2.40.10.170:FF:000005">
    <property type="entry name" value="ATP synthase subunit beta"/>
    <property type="match status" value="1"/>
</dbReference>
<dbReference type="FunFam" id="3.40.50.300:FF:000004">
    <property type="entry name" value="ATP synthase subunit beta"/>
    <property type="match status" value="1"/>
</dbReference>
<dbReference type="Gene3D" id="2.40.10.170">
    <property type="match status" value="1"/>
</dbReference>
<dbReference type="Gene3D" id="1.10.1140.10">
    <property type="entry name" value="Bovine Mitochondrial F1-atpase, Atp Synthase Beta Chain, Chain D, domain 3"/>
    <property type="match status" value="1"/>
</dbReference>
<dbReference type="Gene3D" id="3.40.50.300">
    <property type="entry name" value="P-loop containing nucleotide triphosphate hydrolases"/>
    <property type="match status" value="1"/>
</dbReference>
<dbReference type="HAMAP" id="MF_01347">
    <property type="entry name" value="ATP_synth_beta_bact"/>
    <property type="match status" value="1"/>
</dbReference>
<dbReference type="InterPro" id="IPR003593">
    <property type="entry name" value="AAA+_ATPase"/>
</dbReference>
<dbReference type="InterPro" id="IPR055190">
    <property type="entry name" value="ATP-synt_VA_C"/>
</dbReference>
<dbReference type="InterPro" id="IPR005722">
    <property type="entry name" value="ATP_synth_F1_bsu"/>
</dbReference>
<dbReference type="InterPro" id="IPR020003">
    <property type="entry name" value="ATPase_a/bsu_AS"/>
</dbReference>
<dbReference type="InterPro" id="IPR050053">
    <property type="entry name" value="ATPase_alpha/beta_chains"/>
</dbReference>
<dbReference type="InterPro" id="IPR004100">
    <property type="entry name" value="ATPase_F1/V1/A1_a/bsu_N"/>
</dbReference>
<dbReference type="InterPro" id="IPR036121">
    <property type="entry name" value="ATPase_F1/V1/A1_a/bsu_N_sf"/>
</dbReference>
<dbReference type="InterPro" id="IPR000194">
    <property type="entry name" value="ATPase_F1/V1/A1_a/bsu_nucl-bd"/>
</dbReference>
<dbReference type="InterPro" id="IPR024034">
    <property type="entry name" value="ATPase_F1/V1_b/a_C"/>
</dbReference>
<dbReference type="InterPro" id="IPR027417">
    <property type="entry name" value="P-loop_NTPase"/>
</dbReference>
<dbReference type="NCBIfam" id="TIGR01039">
    <property type="entry name" value="atpD"/>
    <property type="match status" value="1"/>
</dbReference>
<dbReference type="PANTHER" id="PTHR15184">
    <property type="entry name" value="ATP SYNTHASE"/>
    <property type="match status" value="1"/>
</dbReference>
<dbReference type="PANTHER" id="PTHR15184:SF71">
    <property type="entry name" value="ATP SYNTHASE SUBUNIT BETA, MITOCHONDRIAL"/>
    <property type="match status" value="1"/>
</dbReference>
<dbReference type="Pfam" id="PF00006">
    <property type="entry name" value="ATP-synt_ab"/>
    <property type="match status" value="1"/>
</dbReference>
<dbReference type="Pfam" id="PF02874">
    <property type="entry name" value="ATP-synt_ab_N"/>
    <property type="match status" value="1"/>
</dbReference>
<dbReference type="Pfam" id="PF22919">
    <property type="entry name" value="ATP-synt_VA_C"/>
    <property type="match status" value="1"/>
</dbReference>
<dbReference type="SMART" id="SM00382">
    <property type="entry name" value="AAA"/>
    <property type="match status" value="1"/>
</dbReference>
<dbReference type="SUPFAM" id="SSF47917">
    <property type="entry name" value="C-terminal domain of alpha and beta subunits of F1 ATP synthase"/>
    <property type="match status" value="1"/>
</dbReference>
<dbReference type="SUPFAM" id="SSF50615">
    <property type="entry name" value="N-terminal domain of alpha and beta subunits of F1 ATP synthase"/>
    <property type="match status" value="1"/>
</dbReference>
<dbReference type="SUPFAM" id="SSF52540">
    <property type="entry name" value="P-loop containing nucleoside triphosphate hydrolases"/>
    <property type="match status" value="1"/>
</dbReference>
<dbReference type="PROSITE" id="PS00152">
    <property type="entry name" value="ATPASE_ALPHA_BETA"/>
    <property type="match status" value="1"/>
</dbReference>
<comment type="function">
    <text evidence="1">Produces ATP from ADP in the presence of a proton gradient across the membrane. The catalytic sites are hosted primarily by the beta subunits.</text>
</comment>
<comment type="catalytic activity">
    <reaction evidence="1">
        <text>ATP + H2O + 4 H(+)(in) = ADP + phosphate + 5 H(+)(out)</text>
        <dbReference type="Rhea" id="RHEA:57720"/>
        <dbReference type="ChEBI" id="CHEBI:15377"/>
        <dbReference type="ChEBI" id="CHEBI:15378"/>
        <dbReference type="ChEBI" id="CHEBI:30616"/>
        <dbReference type="ChEBI" id="CHEBI:43474"/>
        <dbReference type="ChEBI" id="CHEBI:456216"/>
        <dbReference type="EC" id="7.1.2.2"/>
    </reaction>
</comment>
<comment type="subunit">
    <text evidence="1">F-type ATPases have 2 components, CF(1) - the catalytic core - and CF(0) - the membrane proton channel. CF(1) has five subunits: alpha(3), beta(3), gamma(1), delta(1), epsilon(1). CF(0) has three main subunits: a(1), b(2) and c(9-12). The alpha and beta chains form an alternating ring which encloses part of the gamma chain. CF(1) is attached to CF(0) by a central stalk formed by the gamma and epsilon chains, while a peripheral stalk is formed by the delta and b chains.</text>
</comment>
<comment type="subcellular location">
    <subcellularLocation>
        <location evidence="1">Cell membrane</location>
        <topology evidence="1">Peripheral membrane protein</topology>
    </subcellularLocation>
</comment>
<comment type="similarity">
    <text evidence="1">Belongs to the ATPase alpha/beta chains family.</text>
</comment>
<gene>
    <name evidence="1" type="primary">atpD</name>
</gene>
<sequence>MAKGKIVQVIGPVVDIEFPAEELPSILNAITIKGKSGDIDINLTVEVMQHLGDGITRCIAMSSTDGLTRGMEAVDTGSPIKVPVGEETLGRVFNVLGQTVDHNPAPVGNKEFWPIHRPAPKFDEQETSTQILETGIKVVDLIAPYSRGGKIGLFGGAGVGKTVLIMELIHNIATQHGGYSVFSGVGERTREGNDLWSEMTESGVINKTALVYGQMNEPPGARMRVALTGLTMAEYFRDVQHQDVLLFIDNIFRFIQAGSEVSALLGRMPSAVGYQPTLTTDVGALQERITSTKKGSITSVQAVYVPADDLTDPGPAATFTHLDATTVLSRQIAELGIYPAVDPLDSTSRILDPHVIGEDHYEVARGVQAVLQKYKELQDIIAILGMEELSDADKLTVARARKIQRFLSQPFFVAEQFTGSPGKYVPLKETIRGFKEILEGKYDDLPESAFYMVGSIDEAVEAAKKIKQEA</sequence>
<protein>
    <recommendedName>
        <fullName evidence="1">ATP synthase subunit beta</fullName>
        <ecNumber evidence="1">7.1.2.2</ecNumber>
    </recommendedName>
    <alternativeName>
        <fullName evidence="1">ATP synthase F1 sector subunit beta</fullName>
    </alternativeName>
    <alternativeName>
        <fullName evidence="1">F-ATPase subunit beta</fullName>
    </alternativeName>
</protein>
<reference key="1">
    <citation type="journal article" date="1992" name="Syst. Appl. Microbiol.">
        <title>Subunit beta of adenosine triphosphate synthase of Pectinatus frisingensis and Lactobacillus casei.</title>
        <authorList>
            <person name="Klugbauer N."/>
            <person name="Ludwig W."/>
            <person name="Bauerlein E."/>
            <person name="Schleifer K.H."/>
        </authorList>
    </citation>
    <scope>NUCLEOTIDE SEQUENCE [GENOMIC DNA]</scope>
    <source>
        <strain>DSM 20465 / MKK 1</strain>
    </source>
</reference>
<accession>Q03235</accession>